<gene>
    <name evidence="1" type="primary">thrS</name>
    <name type="ordered locus">Shew_2032</name>
</gene>
<reference key="1">
    <citation type="submission" date="2007-03" db="EMBL/GenBank/DDBJ databases">
        <title>Complete sequence of Shewanella loihica PV-4.</title>
        <authorList>
            <consortium name="US DOE Joint Genome Institute"/>
            <person name="Copeland A."/>
            <person name="Lucas S."/>
            <person name="Lapidus A."/>
            <person name="Barry K."/>
            <person name="Detter J.C."/>
            <person name="Glavina del Rio T."/>
            <person name="Hammon N."/>
            <person name="Israni S."/>
            <person name="Dalin E."/>
            <person name="Tice H."/>
            <person name="Pitluck S."/>
            <person name="Chain P."/>
            <person name="Malfatti S."/>
            <person name="Shin M."/>
            <person name="Vergez L."/>
            <person name="Schmutz J."/>
            <person name="Larimer F."/>
            <person name="Land M."/>
            <person name="Hauser L."/>
            <person name="Kyrpides N."/>
            <person name="Mikhailova N."/>
            <person name="Romine M.F."/>
            <person name="Serres G."/>
            <person name="Fredrickson J."/>
            <person name="Tiedje J."/>
            <person name="Richardson P."/>
        </authorList>
    </citation>
    <scope>NUCLEOTIDE SEQUENCE [LARGE SCALE GENOMIC DNA]</scope>
    <source>
        <strain>ATCC BAA-1088 / PV-4</strain>
    </source>
</reference>
<dbReference type="EC" id="6.1.1.3" evidence="1"/>
<dbReference type="EMBL" id="CP000606">
    <property type="protein sequence ID" value="ABO23898.1"/>
    <property type="molecule type" value="Genomic_DNA"/>
</dbReference>
<dbReference type="RefSeq" id="WP_011865830.1">
    <property type="nucleotide sequence ID" value="NC_009092.1"/>
</dbReference>
<dbReference type="SMR" id="A3QEK0"/>
<dbReference type="STRING" id="323850.Shew_2032"/>
<dbReference type="KEGG" id="slo:Shew_2032"/>
<dbReference type="eggNOG" id="COG0441">
    <property type="taxonomic scope" value="Bacteria"/>
</dbReference>
<dbReference type="HOGENOM" id="CLU_008554_0_1_6"/>
<dbReference type="OrthoDB" id="9802304at2"/>
<dbReference type="Proteomes" id="UP000001558">
    <property type="component" value="Chromosome"/>
</dbReference>
<dbReference type="GO" id="GO:0005829">
    <property type="term" value="C:cytosol"/>
    <property type="evidence" value="ECO:0007669"/>
    <property type="project" value="TreeGrafter"/>
</dbReference>
<dbReference type="GO" id="GO:0005524">
    <property type="term" value="F:ATP binding"/>
    <property type="evidence" value="ECO:0007669"/>
    <property type="project" value="UniProtKB-UniRule"/>
</dbReference>
<dbReference type="GO" id="GO:0046872">
    <property type="term" value="F:metal ion binding"/>
    <property type="evidence" value="ECO:0007669"/>
    <property type="project" value="UniProtKB-KW"/>
</dbReference>
<dbReference type="GO" id="GO:0004829">
    <property type="term" value="F:threonine-tRNA ligase activity"/>
    <property type="evidence" value="ECO:0007669"/>
    <property type="project" value="UniProtKB-UniRule"/>
</dbReference>
<dbReference type="GO" id="GO:0000049">
    <property type="term" value="F:tRNA binding"/>
    <property type="evidence" value="ECO:0007669"/>
    <property type="project" value="UniProtKB-KW"/>
</dbReference>
<dbReference type="GO" id="GO:0006435">
    <property type="term" value="P:threonyl-tRNA aminoacylation"/>
    <property type="evidence" value="ECO:0007669"/>
    <property type="project" value="UniProtKB-UniRule"/>
</dbReference>
<dbReference type="CDD" id="cd01667">
    <property type="entry name" value="TGS_ThrRS"/>
    <property type="match status" value="1"/>
</dbReference>
<dbReference type="CDD" id="cd00860">
    <property type="entry name" value="ThrRS_anticodon"/>
    <property type="match status" value="1"/>
</dbReference>
<dbReference type="CDD" id="cd00771">
    <property type="entry name" value="ThrRS_core"/>
    <property type="match status" value="1"/>
</dbReference>
<dbReference type="FunFam" id="3.10.20.30:FF:000005">
    <property type="entry name" value="Threonine--tRNA ligase"/>
    <property type="match status" value="1"/>
</dbReference>
<dbReference type="FunFam" id="3.30.54.20:FF:000002">
    <property type="entry name" value="Threonine--tRNA ligase"/>
    <property type="match status" value="1"/>
</dbReference>
<dbReference type="FunFam" id="3.30.930.10:FF:000002">
    <property type="entry name" value="Threonine--tRNA ligase"/>
    <property type="match status" value="1"/>
</dbReference>
<dbReference type="FunFam" id="3.40.50.800:FF:000001">
    <property type="entry name" value="Threonine--tRNA ligase"/>
    <property type="match status" value="1"/>
</dbReference>
<dbReference type="FunFam" id="3.30.980.10:FF:000005">
    <property type="entry name" value="Threonyl-tRNA synthetase, mitochondrial"/>
    <property type="match status" value="1"/>
</dbReference>
<dbReference type="Gene3D" id="3.10.20.30">
    <property type="match status" value="1"/>
</dbReference>
<dbReference type="Gene3D" id="3.30.54.20">
    <property type="match status" value="1"/>
</dbReference>
<dbReference type="Gene3D" id="3.40.50.800">
    <property type="entry name" value="Anticodon-binding domain"/>
    <property type="match status" value="1"/>
</dbReference>
<dbReference type="Gene3D" id="3.30.930.10">
    <property type="entry name" value="Bira Bifunctional Protein, Domain 2"/>
    <property type="match status" value="1"/>
</dbReference>
<dbReference type="Gene3D" id="3.30.980.10">
    <property type="entry name" value="Threonyl-trna Synthetase, Chain A, domain 2"/>
    <property type="match status" value="1"/>
</dbReference>
<dbReference type="HAMAP" id="MF_00184">
    <property type="entry name" value="Thr_tRNA_synth"/>
    <property type="match status" value="1"/>
</dbReference>
<dbReference type="InterPro" id="IPR002314">
    <property type="entry name" value="aa-tRNA-synt_IIb"/>
</dbReference>
<dbReference type="InterPro" id="IPR006195">
    <property type="entry name" value="aa-tRNA-synth_II"/>
</dbReference>
<dbReference type="InterPro" id="IPR045864">
    <property type="entry name" value="aa-tRNA-synth_II/BPL/LPL"/>
</dbReference>
<dbReference type="InterPro" id="IPR004154">
    <property type="entry name" value="Anticodon-bd"/>
</dbReference>
<dbReference type="InterPro" id="IPR036621">
    <property type="entry name" value="Anticodon-bd_dom_sf"/>
</dbReference>
<dbReference type="InterPro" id="IPR012675">
    <property type="entry name" value="Beta-grasp_dom_sf"/>
</dbReference>
<dbReference type="InterPro" id="IPR004095">
    <property type="entry name" value="TGS"/>
</dbReference>
<dbReference type="InterPro" id="IPR012676">
    <property type="entry name" value="TGS-like"/>
</dbReference>
<dbReference type="InterPro" id="IPR002320">
    <property type="entry name" value="Thr-tRNA-ligase_IIa"/>
</dbReference>
<dbReference type="InterPro" id="IPR018163">
    <property type="entry name" value="Thr/Ala-tRNA-synth_IIc_edit"/>
</dbReference>
<dbReference type="InterPro" id="IPR047246">
    <property type="entry name" value="ThrRS_anticodon"/>
</dbReference>
<dbReference type="InterPro" id="IPR033728">
    <property type="entry name" value="ThrRS_core"/>
</dbReference>
<dbReference type="InterPro" id="IPR012947">
    <property type="entry name" value="tRNA_SAD"/>
</dbReference>
<dbReference type="NCBIfam" id="TIGR00418">
    <property type="entry name" value="thrS"/>
    <property type="match status" value="1"/>
</dbReference>
<dbReference type="PANTHER" id="PTHR11451:SF44">
    <property type="entry name" value="THREONINE--TRNA LIGASE, CHLOROPLASTIC_MITOCHONDRIAL 2"/>
    <property type="match status" value="1"/>
</dbReference>
<dbReference type="PANTHER" id="PTHR11451">
    <property type="entry name" value="THREONINE-TRNA LIGASE"/>
    <property type="match status" value="1"/>
</dbReference>
<dbReference type="Pfam" id="PF03129">
    <property type="entry name" value="HGTP_anticodon"/>
    <property type="match status" value="1"/>
</dbReference>
<dbReference type="Pfam" id="PF02824">
    <property type="entry name" value="TGS"/>
    <property type="match status" value="1"/>
</dbReference>
<dbReference type="Pfam" id="PF00587">
    <property type="entry name" value="tRNA-synt_2b"/>
    <property type="match status" value="1"/>
</dbReference>
<dbReference type="Pfam" id="PF07973">
    <property type="entry name" value="tRNA_SAD"/>
    <property type="match status" value="1"/>
</dbReference>
<dbReference type="PRINTS" id="PR01047">
    <property type="entry name" value="TRNASYNTHTHR"/>
</dbReference>
<dbReference type="SMART" id="SM00863">
    <property type="entry name" value="tRNA_SAD"/>
    <property type="match status" value="1"/>
</dbReference>
<dbReference type="SUPFAM" id="SSF52954">
    <property type="entry name" value="Class II aaRS ABD-related"/>
    <property type="match status" value="1"/>
</dbReference>
<dbReference type="SUPFAM" id="SSF55681">
    <property type="entry name" value="Class II aaRS and biotin synthetases"/>
    <property type="match status" value="1"/>
</dbReference>
<dbReference type="SUPFAM" id="SSF81271">
    <property type="entry name" value="TGS-like"/>
    <property type="match status" value="1"/>
</dbReference>
<dbReference type="SUPFAM" id="SSF55186">
    <property type="entry name" value="ThrRS/AlaRS common domain"/>
    <property type="match status" value="1"/>
</dbReference>
<dbReference type="PROSITE" id="PS50862">
    <property type="entry name" value="AA_TRNA_LIGASE_II"/>
    <property type="match status" value="1"/>
</dbReference>
<dbReference type="PROSITE" id="PS51880">
    <property type="entry name" value="TGS"/>
    <property type="match status" value="1"/>
</dbReference>
<keyword id="KW-0030">Aminoacyl-tRNA synthetase</keyword>
<keyword id="KW-0067">ATP-binding</keyword>
<keyword id="KW-0963">Cytoplasm</keyword>
<keyword id="KW-0436">Ligase</keyword>
<keyword id="KW-0479">Metal-binding</keyword>
<keyword id="KW-0547">Nucleotide-binding</keyword>
<keyword id="KW-0648">Protein biosynthesis</keyword>
<keyword id="KW-1185">Reference proteome</keyword>
<keyword id="KW-0694">RNA-binding</keyword>
<keyword id="KW-0820">tRNA-binding</keyword>
<keyword id="KW-0862">Zinc</keyword>
<accession>A3QEK0</accession>
<comment type="function">
    <text evidence="1">Catalyzes the attachment of threonine to tRNA(Thr) in a two-step reaction: L-threonine is first activated by ATP to form Thr-AMP and then transferred to the acceptor end of tRNA(Thr). Also edits incorrectly charged L-seryl-tRNA(Thr).</text>
</comment>
<comment type="catalytic activity">
    <reaction evidence="1">
        <text>tRNA(Thr) + L-threonine + ATP = L-threonyl-tRNA(Thr) + AMP + diphosphate + H(+)</text>
        <dbReference type="Rhea" id="RHEA:24624"/>
        <dbReference type="Rhea" id="RHEA-COMP:9670"/>
        <dbReference type="Rhea" id="RHEA-COMP:9704"/>
        <dbReference type="ChEBI" id="CHEBI:15378"/>
        <dbReference type="ChEBI" id="CHEBI:30616"/>
        <dbReference type="ChEBI" id="CHEBI:33019"/>
        <dbReference type="ChEBI" id="CHEBI:57926"/>
        <dbReference type="ChEBI" id="CHEBI:78442"/>
        <dbReference type="ChEBI" id="CHEBI:78534"/>
        <dbReference type="ChEBI" id="CHEBI:456215"/>
        <dbReference type="EC" id="6.1.1.3"/>
    </reaction>
</comment>
<comment type="cofactor">
    <cofactor evidence="1">
        <name>Zn(2+)</name>
        <dbReference type="ChEBI" id="CHEBI:29105"/>
    </cofactor>
    <text evidence="1">Binds 1 zinc ion per subunit.</text>
</comment>
<comment type="subunit">
    <text evidence="1">Homodimer.</text>
</comment>
<comment type="subcellular location">
    <subcellularLocation>
        <location evidence="1">Cytoplasm</location>
    </subcellularLocation>
</comment>
<comment type="similarity">
    <text evidence="1">Belongs to the class-II aminoacyl-tRNA synthetase family.</text>
</comment>
<evidence type="ECO:0000255" key="1">
    <source>
        <dbReference type="HAMAP-Rule" id="MF_00184"/>
    </source>
</evidence>
<evidence type="ECO:0000255" key="2">
    <source>
        <dbReference type="PROSITE-ProRule" id="PRU01228"/>
    </source>
</evidence>
<proteinExistence type="inferred from homology"/>
<sequence>MPVITLPDGSKREFANAVSTLDVAADIGPGLAKACIAGRVNGELKDACDLIETDVDLAIITVKDDEGVEILRHSCAHLLGHAIKQMWPETKMAIGPVIDNGFYYDVDLDHKLTEEDVAELEKRMLALAKTNYDVVKRVVSWQEARDTFESRGESYKMAILDENISKDDQPALYHHEEYTDMCRGPHVPNMKFCHHFKLMSVAGAYWRGNSDNKMLQRIYGTAWADKKALKAHLTRLEEAAKRDHRKIGKQLDLYHMQEEAPGMVFWHNDGWSLFLELERFIRQKLGQYTYQEVKGPLMMDRVLWERSGHWDKYSEAMFTTHSENREYAVKPMNCPGHVQIFNQGLKSYRDLPLRMAEFGCCHRNEPSGSLHGLMRVRGFTQDDAHIFCTEEQVQQEVSGCIKMVYDTYATFGFHDIVVKLSTRPEKRIGDDAMWDRAEQALMDALKANDIEYEILPGEGAFYGPKIEFTLHDCLDRAWQCGTVQLDYALPGRLGATYVAEDNSRQTPVMIHRAILGSLERFLGILIEEYAGKFPTWLAPVQAVVMNITDKQSEYVDEVVKLFKDQGIRASKDLRNEKIGFKIREHTLRRVPYLLVVGDQEMENREVAVRTRDGVDLGKIKIDQFAAMVKEQISLRSLNLLEE</sequence>
<organism>
    <name type="scientific">Shewanella loihica (strain ATCC BAA-1088 / PV-4)</name>
    <dbReference type="NCBI Taxonomy" id="323850"/>
    <lineage>
        <taxon>Bacteria</taxon>
        <taxon>Pseudomonadati</taxon>
        <taxon>Pseudomonadota</taxon>
        <taxon>Gammaproteobacteria</taxon>
        <taxon>Alteromonadales</taxon>
        <taxon>Shewanellaceae</taxon>
        <taxon>Shewanella</taxon>
    </lineage>
</organism>
<protein>
    <recommendedName>
        <fullName evidence="1">Threonine--tRNA ligase</fullName>
        <ecNumber evidence="1">6.1.1.3</ecNumber>
    </recommendedName>
    <alternativeName>
        <fullName evidence="1">Threonyl-tRNA synthetase</fullName>
        <shortName evidence="1">ThrRS</shortName>
    </alternativeName>
</protein>
<feature type="chain" id="PRO_1000020505" description="Threonine--tRNA ligase">
    <location>
        <begin position="1"/>
        <end position="642"/>
    </location>
</feature>
<feature type="domain" description="TGS" evidence="2">
    <location>
        <begin position="1"/>
        <end position="61"/>
    </location>
</feature>
<feature type="region of interest" description="Catalytic" evidence="1">
    <location>
        <begin position="243"/>
        <end position="534"/>
    </location>
</feature>
<feature type="binding site" evidence="1">
    <location>
        <position position="334"/>
    </location>
    <ligand>
        <name>Zn(2+)</name>
        <dbReference type="ChEBI" id="CHEBI:29105"/>
    </ligand>
</feature>
<feature type="binding site" evidence="1">
    <location>
        <position position="385"/>
    </location>
    <ligand>
        <name>Zn(2+)</name>
        <dbReference type="ChEBI" id="CHEBI:29105"/>
    </ligand>
</feature>
<feature type="binding site" evidence="1">
    <location>
        <position position="511"/>
    </location>
    <ligand>
        <name>Zn(2+)</name>
        <dbReference type="ChEBI" id="CHEBI:29105"/>
    </ligand>
</feature>
<name>SYT_SHELP</name>